<sequence>MAEVRNYTFNFGPQHPAAHGVLRLIVEVDGEVIQRIDPHIGLLHRATEKLAESKPYNQTIGYMDRLDYVSMMANEHGYVLAIEKLLGIEPPIRAKYIRTMFDEITRILNHLLWLGAHALDVGAMTVFLYCFREREDLMDCYEAVSGARMHATYYRPGGVYRDLPDSMPKYKPSRWHNEKAVKKMNEAREGSLLDFIWDFTARFPNLIDEYESLLTDNRIWKQRTVGIGVVSAERALQLGFTGPMLRASGVEWDLRKKQPYAAYDRVDFDIPIGREGDCYDRYLVRIEEMRQSNRIIRQCVEWLRKNPGPVMIDDYKIVPPQREVMKRDMEALIHHFKLFTEGYIVPEGEAYAAVEQPKGEFGVYIVSDGANKPYRVKVRAASYPHLAAMNEMCRGHMIADLVAIISSIDIVFGEIDR</sequence>
<gene>
    <name evidence="1" type="primary">nuoD</name>
    <name type="ordered locus">CbuG_0563</name>
</gene>
<comment type="function">
    <text evidence="1">NDH-1 shuttles electrons from NADH, via FMN and iron-sulfur (Fe-S) centers, to quinones in the respiratory chain. The immediate electron acceptor for the enzyme in this species is believed to be ubiquinone. Couples the redox reaction to proton translocation (for every two electrons transferred, four hydrogen ions are translocated across the cytoplasmic membrane), and thus conserves the redox energy in a proton gradient.</text>
</comment>
<comment type="catalytic activity">
    <reaction evidence="1">
        <text>a quinone + NADH + 5 H(+)(in) = a quinol + NAD(+) + 4 H(+)(out)</text>
        <dbReference type="Rhea" id="RHEA:57888"/>
        <dbReference type="ChEBI" id="CHEBI:15378"/>
        <dbReference type="ChEBI" id="CHEBI:24646"/>
        <dbReference type="ChEBI" id="CHEBI:57540"/>
        <dbReference type="ChEBI" id="CHEBI:57945"/>
        <dbReference type="ChEBI" id="CHEBI:132124"/>
    </reaction>
</comment>
<comment type="subunit">
    <text evidence="1">NDH-1 is composed of 14 different subunits. Subunits NuoB, C, D, E, F, and G constitute the peripheral sector of the complex.</text>
</comment>
<comment type="subcellular location">
    <subcellularLocation>
        <location evidence="1">Cell inner membrane</location>
        <topology evidence="1">Peripheral membrane protein</topology>
        <orientation evidence="1">Cytoplasmic side</orientation>
    </subcellularLocation>
</comment>
<comment type="similarity">
    <text evidence="1">Belongs to the complex I 49 kDa subunit family.</text>
</comment>
<proteinExistence type="inferred from homology"/>
<protein>
    <recommendedName>
        <fullName evidence="1">NADH-quinone oxidoreductase subunit D</fullName>
        <ecNumber evidence="1">7.1.1.-</ecNumber>
    </recommendedName>
    <alternativeName>
        <fullName evidence="1">NADH dehydrogenase I subunit D</fullName>
    </alternativeName>
    <alternativeName>
        <fullName evidence="1">NDH-1 subunit D</fullName>
    </alternativeName>
</protein>
<dbReference type="EC" id="7.1.1.-" evidence="1"/>
<dbReference type="EMBL" id="CP001019">
    <property type="protein sequence ID" value="ACJ17976.1"/>
    <property type="molecule type" value="Genomic_DNA"/>
</dbReference>
<dbReference type="SMR" id="B6IZ48"/>
<dbReference type="KEGG" id="cbg:CbuG_0563"/>
<dbReference type="HOGENOM" id="CLU_015134_1_1_6"/>
<dbReference type="GO" id="GO:0005886">
    <property type="term" value="C:plasma membrane"/>
    <property type="evidence" value="ECO:0007669"/>
    <property type="project" value="UniProtKB-SubCell"/>
</dbReference>
<dbReference type="GO" id="GO:0051287">
    <property type="term" value="F:NAD binding"/>
    <property type="evidence" value="ECO:0007669"/>
    <property type="project" value="InterPro"/>
</dbReference>
<dbReference type="GO" id="GO:0050136">
    <property type="term" value="F:NADH:ubiquinone reductase (non-electrogenic) activity"/>
    <property type="evidence" value="ECO:0007669"/>
    <property type="project" value="UniProtKB-UniRule"/>
</dbReference>
<dbReference type="GO" id="GO:0048038">
    <property type="term" value="F:quinone binding"/>
    <property type="evidence" value="ECO:0007669"/>
    <property type="project" value="UniProtKB-KW"/>
</dbReference>
<dbReference type="FunFam" id="1.10.645.10:FF:000005">
    <property type="entry name" value="NADH-quinone oxidoreductase subunit D"/>
    <property type="match status" value="1"/>
</dbReference>
<dbReference type="Gene3D" id="1.10.645.10">
    <property type="entry name" value="Cytochrome-c3 Hydrogenase, chain B"/>
    <property type="match status" value="1"/>
</dbReference>
<dbReference type="HAMAP" id="MF_01358">
    <property type="entry name" value="NDH1_NuoD"/>
    <property type="match status" value="1"/>
</dbReference>
<dbReference type="InterPro" id="IPR001135">
    <property type="entry name" value="NADH_Q_OxRdtase_suD"/>
</dbReference>
<dbReference type="InterPro" id="IPR014029">
    <property type="entry name" value="NADH_UbQ_OxRdtase_49kDa_CS"/>
</dbReference>
<dbReference type="InterPro" id="IPR022885">
    <property type="entry name" value="NDH1_su_D/H"/>
</dbReference>
<dbReference type="InterPro" id="IPR029014">
    <property type="entry name" value="NiFe-Hase_large"/>
</dbReference>
<dbReference type="NCBIfam" id="TIGR01962">
    <property type="entry name" value="NuoD"/>
    <property type="match status" value="1"/>
</dbReference>
<dbReference type="NCBIfam" id="NF004739">
    <property type="entry name" value="PRK06075.1"/>
    <property type="match status" value="1"/>
</dbReference>
<dbReference type="PANTHER" id="PTHR11993:SF10">
    <property type="entry name" value="NADH DEHYDROGENASE [UBIQUINONE] IRON-SULFUR PROTEIN 2, MITOCHONDRIAL"/>
    <property type="match status" value="1"/>
</dbReference>
<dbReference type="PANTHER" id="PTHR11993">
    <property type="entry name" value="NADH-UBIQUINONE OXIDOREDUCTASE 49 KDA SUBUNIT"/>
    <property type="match status" value="1"/>
</dbReference>
<dbReference type="Pfam" id="PF00346">
    <property type="entry name" value="Complex1_49kDa"/>
    <property type="match status" value="1"/>
</dbReference>
<dbReference type="SUPFAM" id="SSF56762">
    <property type="entry name" value="HydB/Nqo4-like"/>
    <property type="match status" value="1"/>
</dbReference>
<dbReference type="PROSITE" id="PS00535">
    <property type="entry name" value="COMPLEX1_49K"/>
    <property type="match status" value="1"/>
</dbReference>
<organism>
    <name type="scientific">Coxiella burnetii (strain CbuG_Q212)</name>
    <name type="common">Coxiella burnetii (strain Q212)</name>
    <dbReference type="NCBI Taxonomy" id="434923"/>
    <lineage>
        <taxon>Bacteria</taxon>
        <taxon>Pseudomonadati</taxon>
        <taxon>Pseudomonadota</taxon>
        <taxon>Gammaproteobacteria</taxon>
        <taxon>Legionellales</taxon>
        <taxon>Coxiellaceae</taxon>
        <taxon>Coxiella</taxon>
    </lineage>
</organism>
<feature type="chain" id="PRO_0000371854" description="NADH-quinone oxidoreductase subunit D">
    <location>
        <begin position="1"/>
        <end position="417"/>
    </location>
</feature>
<reference key="1">
    <citation type="journal article" date="2009" name="Infect. Immun.">
        <title>Comparative genomics reveal extensive transposon-mediated genomic plasticity and diversity among potential effector proteins within the genus Coxiella.</title>
        <authorList>
            <person name="Beare P.A."/>
            <person name="Unsworth N."/>
            <person name="Andoh M."/>
            <person name="Voth D.E."/>
            <person name="Omsland A."/>
            <person name="Gilk S.D."/>
            <person name="Williams K.P."/>
            <person name="Sobral B.W."/>
            <person name="Kupko J.J. III"/>
            <person name="Porcella S.F."/>
            <person name="Samuel J.E."/>
            <person name="Heinzen R.A."/>
        </authorList>
    </citation>
    <scope>NUCLEOTIDE SEQUENCE [LARGE SCALE GENOMIC DNA]</scope>
    <source>
        <strain>CbuG_Q212</strain>
    </source>
</reference>
<name>NUOD_COXB2</name>
<keyword id="KW-0997">Cell inner membrane</keyword>
<keyword id="KW-1003">Cell membrane</keyword>
<keyword id="KW-0472">Membrane</keyword>
<keyword id="KW-0520">NAD</keyword>
<keyword id="KW-0874">Quinone</keyword>
<keyword id="KW-1278">Translocase</keyword>
<keyword id="KW-0813">Transport</keyword>
<keyword id="KW-0830">Ubiquinone</keyword>
<evidence type="ECO:0000255" key="1">
    <source>
        <dbReference type="HAMAP-Rule" id="MF_01358"/>
    </source>
</evidence>
<accession>B6IZ48</accession>